<gene>
    <name evidence="1" type="primary">rplP</name>
    <name type="ordered locus">MMAR_1038</name>
</gene>
<feature type="chain" id="PRO_1000143000" description="Large ribosomal subunit protein uL16">
    <location>
        <begin position="1"/>
        <end position="138"/>
    </location>
</feature>
<feature type="region of interest" description="Disordered" evidence="2">
    <location>
        <begin position="1"/>
        <end position="24"/>
    </location>
</feature>
<feature type="compositionally biased region" description="Basic residues" evidence="2">
    <location>
        <begin position="1"/>
        <end position="17"/>
    </location>
</feature>
<accession>B2HSN8</accession>
<dbReference type="EMBL" id="CP000854">
    <property type="protein sequence ID" value="ACC39496.1"/>
    <property type="molecule type" value="Genomic_DNA"/>
</dbReference>
<dbReference type="RefSeq" id="WP_011739064.1">
    <property type="nucleotide sequence ID" value="NC_010612.1"/>
</dbReference>
<dbReference type="SMR" id="B2HSN8"/>
<dbReference type="STRING" id="216594.MMAR_1038"/>
<dbReference type="GeneID" id="93438593"/>
<dbReference type="KEGG" id="mmi:MMAR_1038"/>
<dbReference type="eggNOG" id="COG0197">
    <property type="taxonomic scope" value="Bacteria"/>
</dbReference>
<dbReference type="HOGENOM" id="CLU_078858_2_1_11"/>
<dbReference type="OrthoDB" id="9802589at2"/>
<dbReference type="Proteomes" id="UP000001190">
    <property type="component" value="Chromosome"/>
</dbReference>
<dbReference type="GO" id="GO:0022625">
    <property type="term" value="C:cytosolic large ribosomal subunit"/>
    <property type="evidence" value="ECO:0007669"/>
    <property type="project" value="TreeGrafter"/>
</dbReference>
<dbReference type="GO" id="GO:0019843">
    <property type="term" value="F:rRNA binding"/>
    <property type="evidence" value="ECO:0007669"/>
    <property type="project" value="UniProtKB-UniRule"/>
</dbReference>
<dbReference type="GO" id="GO:0003735">
    <property type="term" value="F:structural constituent of ribosome"/>
    <property type="evidence" value="ECO:0007669"/>
    <property type="project" value="InterPro"/>
</dbReference>
<dbReference type="GO" id="GO:0000049">
    <property type="term" value="F:tRNA binding"/>
    <property type="evidence" value="ECO:0007669"/>
    <property type="project" value="UniProtKB-KW"/>
</dbReference>
<dbReference type="GO" id="GO:0006412">
    <property type="term" value="P:translation"/>
    <property type="evidence" value="ECO:0007669"/>
    <property type="project" value="UniProtKB-UniRule"/>
</dbReference>
<dbReference type="CDD" id="cd01433">
    <property type="entry name" value="Ribosomal_L16_L10e"/>
    <property type="match status" value="1"/>
</dbReference>
<dbReference type="FunFam" id="3.90.1170.10:FF:000001">
    <property type="entry name" value="50S ribosomal protein L16"/>
    <property type="match status" value="1"/>
</dbReference>
<dbReference type="Gene3D" id="3.90.1170.10">
    <property type="entry name" value="Ribosomal protein L10e/L16"/>
    <property type="match status" value="1"/>
</dbReference>
<dbReference type="HAMAP" id="MF_01342">
    <property type="entry name" value="Ribosomal_uL16"/>
    <property type="match status" value="1"/>
</dbReference>
<dbReference type="InterPro" id="IPR047873">
    <property type="entry name" value="Ribosomal_uL16"/>
</dbReference>
<dbReference type="InterPro" id="IPR000114">
    <property type="entry name" value="Ribosomal_uL16_bact-type"/>
</dbReference>
<dbReference type="InterPro" id="IPR020798">
    <property type="entry name" value="Ribosomal_uL16_CS"/>
</dbReference>
<dbReference type="InterPro" id="IPR016180">
    <property type="entry name" value="Ribosomal_uL16_dom"/>
</dbReference>
<dbReference type="InterPro" id="IPR036920">
    <property type="entry name" value="Ribosomal_uL16_sf"/>
</dbReference>
<dbReference type="NCBIfam" id="TIGR01164">
    <property type="entry name" value="rplP_bact"/>
    <property type="match status" value="1"/>
</dbReference>
<dbReference type="PANTHER" id="PTHR12220">
    <property type="entry name" value="50S/60S RIBOSOMAL PROTEIN L16"/>
    <property type="match status" value="1"/>
</dbReference>
<dbReference type="PANTHER" id="PTHR12220:SF13">
    <property type="entry name" value="LARGE RIBOSOMAL SUBUNIT PROTEIN UL16M"/>
    <property type="match status" value="1"/>
</dbReference>
<dbReference type="Pfam" id="PF00252">
    <property type="entry name" value="Ribosomal_L16"/>
    <property type="match status" value="1"/>
</dbReference>
<dbReference type="PRINTS" id="PR00060">
    <property type="entry name" value="RIBOSOMALL16"/>
</dbReference>
<dbReference type="SUPFAM" id="SSF54686">
    <property type="entry name" value="Ribosomal protein L16p/L10e"/>
    <property type="match status" value="1"/>
</dbReference>
<dbReference type="PROSITE" id="PS00586">
    <property type="entry name" value="RIBOSOMAL_L16_1"/>
    <property type="match status" value="1"/>
</dbReference>
<dbReference type="PROSITE" id="PS00701">
    <property type="entry name" value="RIBOSOMAL_L16_2"/>
    <property type="match status" value="1"/>
</dbReference>
<reference key="1">
    <citation type="journal article" date="2008" name="Genome Res.">
        <title>Insights from the complete genome sequence of Mycobacterium marinum on the evolution of Mycobacterium tuberculosis.</title>
        <authorList>
            <person name="Stinear T.P."/>
            <person name="Seemann T."/>
            <person name="Harrison P.F."/>
            <person name="Jenkin G.A."/>
            <person name="Davies J.K."/>
            <person name="Johnson P.D."/>
            <person name="Abdellah Z."/>
            <person name="Arrowsmith C."/>
            <person name="Chillingworth T."/>
            <person name="Churcher C."/>
            <person name="Clarke K."/>
            <person name="Cronin A."/>
            <person name="Davis P."/>
            <person name="Goodhead I."/>
            <person name="Holroyd N."/>
            <person name="Jagels K."/>
            <person name="Lord A."/>
            <person name="Moule S."/>
            <person name="Mungall K."/>
            <person name="Norbertczak H."/>
            <person name="Quail M.A."/>
            <person name="Rabbinowitsch E."/>
            <person name="Walker D."/>
            <person name="White B."/>
            <person name="Whitehead S."/>
            <person name="Small P.L."/>
            <person name="Brosch R."/>
            <person name="Ramakrishnan L."/>
            <person name="Fischbach M.A."/>
            <person name="Parkhill J."/>
            <person name="Cole S.T."/>
        </authorList>
    </citation>
    <scope>NUCLEOTIDE SEQUENCE [LARGE SCALE GENOMIC DNA]</scope>
    <source>
        <strain>ATCC BAA-535 / M</strain>
    </source>
</reference>
<proteinExistence type="inferred from homology"/>
<name>RL16_MYCMM</name>
<organism>
    <name type="scientific">Mycobacterium marinum (strain ATCC BAA-535 / M)</name>
    <dbReference type="NCBI Taxonomy" id="216594"/>
    <lineage>
        <taxon>Bacteria</taxon>
        <taxon>Bacillati</taxon>
        <taxon>Actinomycetota</taxon>
        <taxon>Actinomycetes</taxon>
        <taxon>Mycobacteriales</taxon>
        <taxon>Mycobacteriaceae</taxon>
        <taxon>Mycobacterium</taxon>
        <taxon>Mycobacterium ulcerans group</taxon>
    </lineage>
</organism>
<protein>
    <recommendedName>
        <fullName evidence="1">Large ribosomal subunit protein uL16</fullName>
    </recommendedName>
    <alternativeName>
        <fullName evidence="3">50S ribosomal protein L16</fullName>
    </alternativeName>
</protein>
<evidence type="ECO:0000255" key="1">
    <source>
        <dbReference type="HAMAP-Rule" id="MF_01342"/>
    </source>
</evidence>
<evidence type="ECO:0000256" key="2">
    <source>
        <dbReference type="SAM" id="MobiDB-lite"/>
    </source>
</evidence>
<evidence type="ECO:0000305" key="3"/>
<sequence length="138" mass="15706">MLIPRKVKHRKQHHPRQRGIASGGTSVNFGDYGIQALEHAYVTNRQIESARIAINRHIKRGGKVWINIFPDRPLTKKPAETRMGSGKGSPEWWVANVKPGRVLFELSYPNEAIARAALTRAIHKLPIKARIITREEQF</sequence>
<keyword id="KW-1185">Reference proteome</keyword>
<keyword id="KW-0687">Ribonucleoprotein</keyword>
<keyword id="KW-0689">Ribosomal protein</keyword>
<keyword id="KW-0694">RNA-binding</keyword>
<keyword id="KW-0699">rRNA-binding</keyword>
<keyword id="KW-0820">tRNA-binding</keyword>
<comment type="function">
    <text evidence="1">Binds 23S rRNA and is also seen to make contacts with the A and possibly P site tRNAs.</text>
</comment>
<comment type="subunit">
    <text evidence="1">Part of the 50S ribosomal subunit.</text>
</comment>
<comment type="similarity">
    <text evidence="1">Belongs to the universal ribosomal protein uL16 family.</text>
</comment>